<protein>
    <recommendedName>
        <fullName>Elongation factor P</fullName>
        <shortName>EF-P</shortName>
    </recommendedName>
</protein>
<keyword id="KW-0963">Cytoplasm</keyword>
<keyword id="KW-0251">Elongation factor</keyword>
<keyword id="KW-0648">Protein biosynthesis</keyword>
<keyword id="KW-1185">Reference proteome</keyword>
<reference key="1">
    <citation type="journal article" date="2001" name="Genome Res.">
        <title>The complete genome sequence of the lactic acid bacterium Lactococcus lactis ssp. lactis IL1403.</title>
        <authorList>
            <person name="Bolotin A."/>
            <person name="Wincker P."/>
            <person name="Mauger S."/>
            <person name="Jaillon O."/>
            <person name="Malarme K."/>
            <person name="Weissenbach J."/>
            <person name="Ehrlich S.D."/>
            <person name="Sorokin A."/>
        </authorList>
    </citation>
    <scope>NUCLEOTIDE SEQUENCE [LARGE SCALE GENOMIC DNA]</scope>
    <source>
        <strain>IL1403</strain>
    </source>
</reference>
<evidence type="ECO:0000250" key="1"/>
<evidence type="ECO:0000305" key="2"/>
<comment type="function">
    <text evidence="1">Involved in peptide bond synthesis. Stimulates efficient translation and peptide-bond synthesis on native or reconstituted 70S ribosomes in vitro. Probably functions indirectly by altering the affinity of the ribosome for aminoacyl-tRNA, thus increasing their reactivity as acceptors for peptidyl transferase (By similarity).</text>
</comment>
<comment type="pathway">
    <text>Protein biosynthesis; polypeptide chain elongation.</text>
</comment>
<comment type="subcellular location">
    <subcellularLocation>
        <location evidence="1">Cytoplasm</location>
    </subcellularLocation>
</comment>
<comment type="similarity">
    <text evidence="2">Belongs to the elongation factor P family.</text>
</comment>
<dbReference type="EMBL" id="AE005176">
    <property type="protein sequence ID" value="AAK04790.1"/>
    <property type="molecule type" value="Genomic_DNA"/>
</dbReference>
<dbReference type="PIR" id="D86711">
    <property type="entry name" value="D86711"/>
</dbReference>
<dbReference type="RefSeq" id="NP_266848.1">
    <property type="nucleotide sequence ID" value="NC_002662.1"/>
</dbReference>
<dbReference type="RefSeq" id="WP_003129623.1">
    <property type="nucleotide sequence ID" value="NC_002662.1"/>
</dbReference>
<dbReference type="SMR" id="Q9CHN6"/>
<dbReference type="PaxDb" id="272623-L0377"/>
<dbReference type="EnsemblBacteria" id="AAK04790">
    <property type="protein sequence ID" value="AAK04790"/>
    <property type="gene ID" value="L0377"/>
</dbReference>
<dbReference type="GeneID" id="89632829"/>
<dbReference type="KEGG" id="lla:L0377"/>
<dbReference type="PATRIC" id="fig|272623.7.peg.743"/>
<dbReference type="eggNOG" id="COG0231">
    <property type="taxonomic scope" value="Bacteria"/>
</dbReference>
<dbReference type="HOGENOM" id="CLU_074944_3_0_9"/>
<dbReference type="OrthoDB" id="9801844at2"/>
<dbReference type="UniPathway" id="UPA00345"/>
<dbReference type="Proteomes" id="UP000002196">
    <property type="component" value="Chromosome"/>
</dbReference>
<dbReference type="GO" id="GO:0005737">
    <property type="term" value="C:cytoplasm"/>
    <property type="evidence" value="ECO:0007669"/>
    <property type="project" value="UniProtKB-SubCell"/>
</dbReference>
<dbReference type="GO" id="GO:0003746">
    <property type="term" value="F:translation elongation factor activity"/>
    <property type="evidence" value="ECO:0007669"/>
    <property type="project" value="UniProtKB-UniRule"/>
</dbReference>
<dbReference type="GO" id="GO:0043043">
    <property type="term" value="P:peptide biosynthetic process"/>
    <property type="evidence" value="ECO:0007669"/>
    <property type="project" value="InterPro"/>
</dbReference>
<dbReference type="CDD" id="cd04470">
    <property type="entry name" value="S1_EF-P_repeat_1"/>
    <property type="match status" value="1"/>
</dbReference>
<dbReference type="CDD" id="cd05794">
    <property type="entry name" value="S1_EF-P_repeat_2"/>
    <property type="match status" value="1"/>
</dbReference>
<dbReference type="FunFam" id="2.30.30.30:FF:000003">
    <property type="entry name" value="Elongation factor P"/>
    <property type="match status" value="1"/>
</dbReference>
<dbReference type="FunFam" id="2.40.50.140:FF:000004">
    <property type="entry name" value="Elongation factor P"/>
    <property type="match status" value="1"/>
</dbReference>
<dbReference type="FunFam" id="2.40.50.140:FF:000009">
    <property type="entry name" value="Elongation factor P"/>
    <property type="match status" value="1"/>
</dbReference>
<dbReference type="Gene3D" id="2.30.30.30">
    <property type="match status" value="1"/>
</dbReference>
<dbReference type="Gene3D" id="2.40.50.140">
    <property type="entry name" value="Nucleic acid-binding proteins"/>
    <property type="match status" value="2"/>
</dbReference>
<dbReference type="HAMAP" id="MF_00141">
    <property type="entry name" value="EF_P"/>
    <property type="match status" value="1"/>
</dbReference>
<dbReference type="InterPro" id="IPR015365">
    <property type="entry name" value="Elong-fact-P_C"/>
</dbReference>
<dbReference type="InterPro" id="IPR012340">
    <property type="entry name" value="NA-bd_OB-fold"/>
</dbReference>
<dbReference type="InterPro" id="IPR014722">
    <property type="entry name" value="Rib_uL2_dom2"/>
</dbReference>
<dbReference type="InterPro" id="IPR020599">
    <property type="entry name" value="Transl_elong_fac_P/YeiP"/>
</dbReference>
<dbReference type="InterPro" id="IPR013185">
    <property type="entry name" value="Transl_elong_KOW-like"/>
</dbReference>
<dbReference type="InterPro" id="IPR001059">
    <property type="entry name" value="Transl_elong_P/YeiP_cen"/>
</dbReference>
<dbReference type="InterPro" id="IPR013852">
    <property type="entry name" value="Transl_elong_P/YeiP_CS"/>
</dbReference>
<dbReference type="InterPro" id="IPR011768">
    <property type="entry name" value="Transl_elongation_fac_P"/>
</dbReference>
<dbReference type="InterPro" id="IPR008991">
    <property type="entry name" value="Translation_prot_SH3-like_sf"/>
</dbReference>
<dbReference type="NCBIfam" id="TIGR00038">
    <property type="entry name" value="efp"/>
    <property type="match status" value="1"/>
</dbReference>
<dbReference type="NCBIfam" id="NF001810">
    <property type="entry name" value="PRK00529.1"/>
    <property type="match status" value="1"/>
</dbReference>
<dbReference type="PANTHER" id="PTHR30053">
    <property type="entry name" value="ELONGATION FACTOR P"/>
    <property type="match status" value="1"/>
</dbReference>
<dbReference type="PANTHER" id="PTHR30053:SF12">
    <property type="entry name" value="ELONGATION FACTOR P (EF-P) FAMILY PROTEIN"/>
    <property type="match status" value="1"/>
</dbReference>
<dbReference type="Pfam" id="PF01132">
    <property type="entry name" value="EFP"/>
    <property type="match status" value="1"/>
</dbReference>
<dbReference type="Pfam" id="PF08207">
    <property type="entry name" value="EFP_N"/>
    <property type="match status" value="1"/>
</dbReference>
<dbReference type="Pfam" id="PF09285">
    <property type="entry name" value="Elong-fact-P_C"/>
    <property type="match status" value="1"/>
</dbReference>
<dbReference type="PIRSF" id="PIRSF005901">
    <property type="entry name" value="EF-P"/>
    <property type="match status" value="1"/>
</dbReference>
<dbReference type="SMART" id="SM01185">
    <property type="entry name" value="EFP"/>
    <property type="match status" value="1"/>
</dbReference>
<dbReference type="SMART" id="SM00841">
    <property type="entry name" value="Elong-fact-P_C"/>
    <property type="match status" value="1"/>
</dbReference>
<dbReference type="SUPFAM" id="SSF50249">
    <property type="entry name" value="Nucleic acid-binding proteins"/>
    <property type="match status" value="2"/>
</dbReference>
<dbReference type="SUPFAM" id="SSF50104">
    <property type="entry name" value="Translation proteins SH3-like domain"/>
    <property type="match status" value="1"/>
</dbReference>
<dbReference type="PROSITE" id="PS01275">
    <property type="entry name" value="EFP"/>
    <property type="match status" value="1"/>
</dbReference>
<sequence length="185" mass="20654">MVLAKDLKSGMTFLNGEKLLRVMEASHHKPGKGNTIMRMKLKDVRSGSTFDDTYRPEDKFEQAVIETVTAQYLYSMDGIANFMNNETYEQYEIPVEQVKDELLYVLENTDVKIQFYGTEVIGIQLPTTVVLEVTETQPSIKGATVTGSGKPATMETGLVVNVPDFVEAGTKLEINTQTGEYLKRA</sequence>
<name>EFP_LACLA</name>
<gene>
    <name type="primary">efp</name>
    <name type="ordered locus">LL0692</name>
    <name type="ORF">L0377</name>
</gene>
<proteinExistence type="inferred from homology"/>
<accession>Q9CHN6</accession>
<organism>
    <name type="scientific">Lactococcus lactis subsp. lactis (strain IL1403)</name>
    <name type="common">Streptococcus lactis</name>
    <dbReference type="NCBI Taxonomy" id="272623"/>
    <lineage>
        <taxon>Bacteria</taxon>
        <taxon>Bacillati</taxon>
        <taxon>Bacillota</taxon>
        <taxon>Bacilli</taxon>
        <taxon>Lactobacillales</taxon>
        <taxon>Streptococcaceae</taxon>
        <taxon>Lactococcus</taxon>
    </lineage>
</organism>
<feature type="chain" id="PRO_0000094267" description="Elongation factor P">
    <location>
        <begin position="1"/>
        <end position="185"/>
    </location>
</feature>